<feature type="chain" id="PRO_0000217000" description="UPF0297 protein TTE1249">
    <location>
        <begin position="1"/>
        <end position="92"/>
    </location>
</feature>
<evidence type="ECO:0000255" key="1">
    <source>
        <dbReference type="HAMAP-Rule" id="MF_01507"/>
    </source>
</evidence>
<comment type="similarity">
    <text evidence="1">Belongs to the UPF0297 family.</text>
</comment>
<sequence>MIESEVIALVEKNEQTIKYTVSKDKKSVKEILEAVYEALSEKGYDPVNQIVGYILSGDPTYITSHKNARNLIRKIERDELVEELLKSYLSKE</sequence>
<keyword id="KW-1185">Reference proteome</keyword>
<accession>Q8RAH3</accession>
<dbReference type="EMBL" id="AE008691">
    <property type="protein sequence ID" value="AAM24473.1"/>
    <property type="molecule type" value="Genomic_DNA"/>
</dbReference>
<dbReference type="SMR" id="Q8RAH3"/>
<dbReference type="STRING" id="273068.TTE1249"/>
<dbReference type="KEGG" id="tte:TTE1249"/>
<dbReference type="eggNOG" id="COG4472">
    <property type="taxonomic scope" value="Bacteria"/>
</dbReference>
<dbReference type="HOGENOM" id="CLU_162466_0_0_9"/>
<dbReference type="Proteomes" id="UP000000555">
    <property type="component" value="Chromosome"/>
</dbReference>
<dbReference type="HAMAP" id="MF_01507">
    <property type="entry name" value="UPF0297"/>
    <property type="match status" value="1"/>
</dbReference>
<dbReference type="InterPro" id="IPR009309">
    <property type="entry name" value="IreB"/>
</dbReference>
<dbReference type="NCBIfam" id="NF003997">
    <property type="entry name" value="PRK05473.1"/>
    <property type="match status" value="1"/>
</dbReference>
<dbReference type="PANTHER" id="PTHR40067">
    <property type="entry name" value="UPF0297 PROTEIN YRZL"/>
    <property type="match status" value="1"/>
</dbReference>
<dbReference type="PANTHER" id="PTHR40067:SF1">
    <property type="entry name" value="UPF0297 PROTEIN YRZL"/>
    <property type="match status" value="1"/>
</dbReference>
<dbReference type="Pfam" id="PF06135">
    <property type="entry name" value="IreB"/>
    <property type="match status" value="1"/>
</dbReference>
<dbReference type="PIRSF" id="PIRSF037258">
    <property type="entry name" value="DUF965_bac"/>
    <property type="match status" value="1"/>
</dbReference>
<proteinExistence type="inferred from homology"/>
<gene>
    <name type="ordered locus">TTE1249</name>
</gene>
<name>Y1249_CALS4</name>
<reference key="1">
    <citation type="journal article" date="2002" name="Genome Res.">
        <title>A complete sequence of the T. tengcongensis genome.</title>
        <authorList>
            <person name="Bao Q."/>
            <person name="Tian Y."/>
            <person name="Li W."/>
            <person name="Xu Z."/>
            <person name="Xuan Z."/>
            <person name="Hu S."/>
            <person name="Dong W."/>
            <person name="Yang J."/>
            <person name="Chen Y."/>
            <person name="Xue Y."/>
            <person name="Xu Y."/>
            <person name="Lai X."/>
            <person name="Huang L."/>
            <person name="Dong X."/>
            <person name="Ma Y."/>
            <person name="Ling L."/>
            <person name="Tan H."/>
            <person name="Chen R."/>
            <person name="Wang J."/>
            <person name="Yu J."/>
            <person name="Yang H."/>
        </authorList>
    </citation>
    <scope>NUCLEOTIDE SEQUENCE [LARGE SCALE GENOMIC DNA]</scope>
    <source>
        <strain>DSM 15242 / JCM 11007 / NBRC 100824 / MB4</strain>
    </source>
</reference>
<protein>
    <recommendedName>
        <fullName evidence="1">UPF0297 protein TTE1249</fullName>
    </recommendedName>
</protein>
<organism>
    <name type="scientific">Caldanaerobacter subterraneus subsp. tengcongensis (strain DSM 15242 / JCM 11007 / NBRC 100824 / MB4)</name>
    <name type="common">Thermoanaerobacter tengcongensis</name>
    <dbReference type="NCBI Taxonomy" id="273068"/>
    <lineage>
        <taxon>Bacteria</taxon>
        <taxon>Bacillati</taxon>
        <taxon>Bacillota</taxon>
        <taxon>Clostridia</taxon>
        <taxon>Thermoanaerobacterales</taxon>
        <taxon>Thermoanaerobacteraceae</taxon>
        <taxon>Caldanaerobacter</taxon>
    </lineage>
</organism>